<evidence type="ECO:0000255" key="1">
    <source>
        <dbReference type="PROSITE-ProRule" id="PRU00303"/>
    </source>
</evidence>
<evidence type="ECO:0000305" key="2"/>
<organism>
    <name type="scientific">Escherichia coli (strain K12)</name>
    <dbReference type="NCBI Taxonomy" id="83333"/>
    <lineage>
        <taxon>Bacteria</taxon>
        <taxon>Pseudomonadati</taxon>
        <taxon>Pseudomonadota</taxon>
        <taxon>Gammaproteobacteria</taxon>
        <taxon>Enterobacterales</taxon>
        <taxon>Enterobacteriaceae</taxon>
        <taxon>Escherichia</taxon>
    </lineage>
</organism>
<gene>
    <name type="primary">ecnA</name>
    <name type="ordered locus">b4410</name>
    <name type="ordered locus">JW5737</name>
</gene>
<feature type="signal peptide" evidence="1">
    <location>
        <begin position="1"/>
        <end position="18"/>
    </location>
</feature>
<feature type="peptide" id="PRO_0000018168" description="Entericidin A">
    <location>
        <begin position="19"/>
        <end position="41"/>
    </location>
</feature>
<feature type="lipid moiety-binding region" description="N-palmitoyl cysteine" evidence="2">
    <location>
        <position position="19"/>
    </location>
</feature>
<feature type="lipid moiety-binding region" description="S-diacylglycerol cysteine" evidence="2">
    <location>
        <position position="19"/>
    </location>
</feature>
<dbReference type="EMBL" id="U21726">
    <property type="protein sequence ID" value="AAC46455.1"/>
    <property type="molecule type" value="Genomic_DNA"/>
</dbReference>
<dbReference type="EMBL" id="U14003">
    <property type="status" value="NOT_ANNOTATED_CDS"/>
    <property type="molecule type" value="Genomic_DNA"/>
</dbReference>
<dbReference type="EMBL" id="U00096">
    <property type="protein sequence ID" value="AAT48241.1"/>
    <property type="molecule type" value="Genomic_DNA"/>
</dbReference>
<dbReference type="EMBL" id="AP009048">
    <property type="protein sequence ID" value="BAE78150.1"/>
    <property type="molecule type" value="Genomic_DNA"/>
</dbReference>
<dbReference type="RefSeq" id="WP_000977757.1">
    <property type="nucleotide sequence ID" value="NZ_STEB01000014.1"/>
</dbReference>
<dbReference type="RefSeq" id="YP_026283.1">
    <property type="nucleotide sequence ID" value="NC_000913.3"/>
</dbReference>
<dbReference type="BioGRID" id="4262117">
    <property type="interactions" value="282"/>
</dbReference>
<dbReference type="FunCoup" id="P0ADB4">
    <property type="interactions" value="51"/>
</dbReference>
<dbReference type="STRING" id="511145.b4410"/>
<dbReference type="PaxDb" id="511145-b4410"/>
<dbReference type="EnsemblBacteria" id="AAT48241">
    <property type="protein sequence ID" value="AAT48241"/>
    <property type="gene ID" value="b4410"/>
</dbReference>
<dbReference type="GeneID" id="2847736"/>
<dbReference type="GeneID" id="93777676"/>
<dbReference type="KEGG" id="ecj:JW5737"/>
<dbReference type="KEGG" id="eco:b4410"/>
<dbReference type="KEGG" id="ecoc:C3026_22415"/>
<dbReference type="PATRIC" id="fig|511145.12.peg.4280"/>
<dbReference type="EchoBASE" id="EB4115"/>
<dbReference type="eggNOG" id="COG5510">
    <property type="taxonomic scope" value="Bacteria"/>
</dbReference>
<dbReference type="HOGENOM" id="CLU_193827_2_1_6"/>
<dbReference type="InParanoid" id="P0ADB4"/>
<dbReference type="PhylomeDB" id="P0ADB4"/>
<dbReference type="BioCyc" id="EcoCyc:MONOMER0-1562"/>
<dbReference type="PRO" id="PR:P0ADB4"/>
<dbReference type="Proteomes" id="UP000000625">
    <property type="component" value="Chromosome"/>
</dbReference>
<dbReference type="GO" id="GO:0016020">
    <property type="term" value="C:membrane"/>
    <property type="evidence" value="ECO:0000314"/>
    <property type="project" value="EcoCyc"/>
</dbReference>
<dbReference type="GO" id="GO:0005886">
    <property type="term" value="C:plasma membrane"/>
    <property type="evidence" value="ECO:0007669"/>
    <property type="project" value="UniProtKB-SubCell"/>
</dbReference>
<dbReference type="GO" id="GO:0009636">
    <property type="term" value="P:response to toxic substance"/>
    <property type="evidence" value="ECO:0007669"/>
    <property type="project" value="InterPro"/>
</dbReference>
<dbReference type="InterPro" id="IPR012556">
    <property type="entry name" value="Entericidin"/>
</dbReference>
<dbReference type="NCBIfam" id="NF007319">
    <property type="entry name" value="PRK09810.1"/>
    <property type="match status" value="1"/>
</dbReference>
<dbReference type="Pfam" id="PF08085">
    <property type="entry name" value="Entericidin"/>
    <property type="match status" value="1"/>
</dbReference>
<dbReference type="PROSITE" id="PS51257">
    <property type="entry name" value="PROKAR_LIPOPROTEIN"/>
    <property type="match status" value="1"/>
</dbReference>
<accession>P0ADB4</accession>
<accession>P56548</accession>
<accession>Q2M6F6</accession>
<sequence length="41" mass="4359">MMKRLIVLVLLASTLLTGCNTARGFGEDIKHLGNSISRAAS</sequence>
<comment type="function">
    <text>Acts as antidote to the effect of entericidin B.</text>
</comment>
<comment type="subcellular location">
    <subcellularLocation>
        <location>Cell membrane</location>
        <topology>Lipid-anchor</topology>
    </subcellularLocation>
</comment>
<comment type="similarity">
    <text evidence="2">Belongs to the EcnA/EcnB lipoprotein family.</text>
</comment>
<name>ECNA_ECOLI</name>
<protein>
    <recommendedName>
        <fullName>Entericidin A</fullName>
    </recommendedName>
</protein>
<reference key="1">
    <citation type="journal article" date="1998" name="J. Mol. Biol.">
        <title>The entericidin locus of Escherichia coli and its implications for programmed bacterial cell death.</title>
        <authorList>
            <person name="Bishop R.E."/>
            <person name="Leskiw B.K."/>
            <person name="Hodges R.S."/>
            <person name="Kay C.M."/>
            <person name="Weiner J.H."/>
        </authorList>
    </citation>
    <scope>NUCLEOTIDE SEQUENCE [GENOMIC DNA]</scope>
    <source>
        <strain>K12 / CS520</strain>
    </source>
</reference>
<reference key="2">
    <citation type="journal article" date="1995" name="Nucleic Acids Res.">
        <title>Analysis of the Escherichia coli genome VI: DNA sequence of the region from 92.8 through 100 minutes.</title>
        <authorList>
            <person name="Burland V.D."/>
            <person name="Plunkett G. III"/>
            <person name="Sofia H.J."/>
            <person name="Daniels D.L."/>
            <person name="Blattner F.R."/>
        </authorList>
    </citation>
    <scope>NUCLEOTIDE SEQUENCE [LARGE SCALE GENOMIC DNA]</scope>
    <source>
        <strain>K12 / MG1655 / ATCC 47076</strain>
    </source>
</reference>
<reference key="3">
    <citation type="journal article" date="1997" name="Science">
        <title>The complete genome sequence of Escherichia coli K-12.</title>
        <authorList>
            <person name="Blattner F.R."/>
            <person name="Plunkett G. III"/>
            <person name="Bloch C.A."/>
            <person name="Perna N.T."/>
            <person name="Burland V."/>
            <person name="Riley M."/>
            <person name="Collado-Vides J."/>
            <person name="Glasner J.D."/>
            <person name="Rode C.K."/>
            <person name="Mayhew G.F."/>
            <person name="Gregor J."/>
            <person name="Davis N.W."/>
            <person name="Kirkpatrick H.A."/>
            <person name="Goeden M.A."/>
            <person name="Rose D.J."/>
            <person name="Mau B."/>
            <person name="Shao Y."/>
        </authorList>
    </citation>
    <scope>NUCLEOTIDE SEQUENCE [LARGE SCALE GENOMIC DNA]</scope>
    <source>
        <strain>K12 / MG1655 / ATCC 47076</strain>
    </source>
</reference>
<reference key="4">
    <citation type="journal article" date="2006" name="Mol. Syst. Biol.">
        <title>Highly accurate genome sequences of Escherichia coli K-12 strains MG1655 and W3110.</title>
        <authorList>
            <person name="Hayashi K."/>
            <person name="Morooka N."/>
            <person name="Yamamoto Y."/>
            <person name="Fujita K."/>
            <person name="Isono K."/>
            <person name="Choi S."/>
            <person name="Ohtsubo E."/>
            <person name="Baba T."/>
            <person name="Wanner B.L."/>
            <person name="Mori H."/>
            <person name="Horiuchi T."/>
        </authorList>
    </citation>
    <scope>NUCLEOTIDE SEQUENCE [LARGE SCALE GENOMIC DNA]</scope>
    <source>
        <strain>K12 / W3110 / ATCC 27325 / DSM 5911</strain>
    </source>
</reference>
<proteinExistence type="inferred from homology"/>
<keyword id="KW-1003">Cell membrane</keyword>
<keyword id="KW-0449">Lipoprotein</keyword>
<keyword id="KW-0472">Membrane</keyword>
<keyword id="KW-0564">Palmitate</keyword>
<keyword id="KW-1185">Reference proteome</keyword>
<keyword id="KW-0732">Signal</keyword>